<sequence>MGYRKLGRTSDQRKAMLRDLATSLIVSERIETTEARAKEVRSVVEKLITLGKKGDLASRRNAAKTLRNVEILNEDDSTQTALQKLFGEIAERYSERQGGYTRILKVGPRRGDGAESVIIELV</sequence>
<gene>
    <name evidence="1" type="primary">rplQ</name>
    <name type="ordered locus">SERP1804</name>
</gene>
<feature type="chain" id="PRO_0000224143" description="Large ribosomal subunit protein bL17">
    <location>
        <begin position="1"/>
        <end position="122"/>
    </location>
</feature>
<protein>
    <recommendedName>
        <fullName evidence="1">Large ribosomal subunit protein bL17</fullName>
    </recommendedName>
    <alternativeName>
        <fullName evidence="2">50S ribosomal protein L17</fullName>
    </alternativeName>
</protein>
<comment type="subunit">
    <text evidence="1">Part of the 50S ribosomal subunit. Contacts protein L32.</text>
</comment>
<comment type="similarity">
    <text evidence="1">Belongs to the bacterial ribosomal protein bL17 family.</text>
</comment>
<accession>Q5HM26</accession>
<name>RL17_STAEQ</name>
<dbReference type="EMBL" id="CP000029">
    <property type="protein sequence ID" value="AAW55197.1"/>
    <property type="molecule type" value="Genomic_DNA"/>
</dbReference>
<dbReference type="RefSeq" id="WP_001829718.1">
    <property type="nucleotide sequence ID" value="NC_002976.3"/>
</dbReference>
<dbReference type="SMR" id="Q5HM26"/>
<dbReference type="STRING" id="176279.SERP1804"/>
<dbReference type="GeneID" id="50018100"/>
<dbReference type="KEGG" id="ser:SERP1804"/>
<dbReference type="eggNOG" id="COG0203">
    <property type="taxonomic scope" value="Bacteria"/>
</dbReference>
<dbReference type="HOGENOM" id="CLU_074407_2_2_9"/>
<dbReference type="Proteomes" id="UP000000531">
    <property type="component" value="Chromosome"/>
</dbReference>
<dbReference type="GO" id="GO:0022625">
    <property type="term" value="C:cytosolic large ribosomal subunit"/>
    <property type="evidence" value="ECO:0007669"/>
    <property type="project" value="TreeGrafter"/>
</dbReference>
<dbReference type="GO" id="GO:0003735">
    <property type="term" value="F:structural constituent of ribosome"/>
    <property type="evidence" value="ECO:0007669"/>
    <property type="project" value="InterPro"/>
</dbReference>
<dbReference type="GO" id="GO:0006412">
    <property type="term" value="P:translation"/>
    <property type="evidence" value="ECO:0007669"/>
    <property type="project" value="UniProtKB-UniRule"/>
</dbReference>
<dbReference type="FunFam" id="3.90.1030.10:FF:000002">
    <property type="entry name" value="50S ribosomal protein L17"/>
    <property type="match status" value="1"/>
</dbReference>
<dbReference type="Gene3D" id="3.90.1030.10">
    <property type="entry name" value="Ribosomal protein L17"/>
    <property type="match status" value="1"/>
</dbReference>
<dbReference type="HAMAP" id="MF_01368">
    <property type="entry name" value="Ribosomal_bL17"/>
    <property type="match status" value="1"/>
</dbReference>
<dbReference type="InterPro" id="IPR000456">
    <property type="entry name" value="Ribosomal_bL17"/>
</dbReference>
<dbReference type="InterPro" id="IPR047859">
    <property type="entry name" value="Ribosomal_bL17_CS"/>
</dbReference>
<dbReference type="InterPro" id="IPR036373">
    <property type="entry name" value="Ribosomal_bL17_sf"/>
</dbReference>
<dbReference type="NCBIfam" id="TIGR00059">
    <property type="entry name" value="L17"/>
    <property type="match status" value="1"/>
</dbReference>
<dbReference type="PANTHER" id="PTHR14413:SF16">
    <property type="entry name" value="LARGE RIBOSOMAL SUBUNIT PROTEIN BL17M"/>
    <property type="match status" value="1"/>
</dbReference>
<dbReference type="PANTHER" id="PTHR14413">
    <property type="entry name" value="RIBOSOMAL PROTEIN L17"/>
    <property type="match status" value="1"/>
</dbReference>
<dbReference type="Pfam" id="PF01196">
    <property type="entry name" value="Ribosomal_L17"/>
    <property type="match status" value="1"/>
</dbReference>
<dbReference type="SUPFAM" id="SSF64263">
    <property type="entry name" value="Prokaryotic ribosomal protein L17"/>
    <property type="match status" value="1"/>
</dbReference>
<dbReference type="PROSITE" id="PS01167">
    <property type="entry name" value="RIBOSOMAL_L17"/>
    <property type="match status" value="1"/>
</dbReference>
<reference key="1">
    <citation type="journal article" date="2005" name="J. Bacteriol.">
        <title>Insights on evolution of virulence and resistance from the complete genome analysis of an early methicillin-resistant Staphylococcus aureus strain and a biofilm-producing methicillin-resistant Staphylococcus epidermidis strain.</title>
        <authorList>
            <person name="Gill S.R."/>
            <person name="Fouts D.E."/>
            <person name="Archer G.L."/>
            <person name="Mongodin E.F."/>
            <person name="DeBoy R.T."/>
            <person name="Ravel J."/>
            <person name="Paulsen I.T."/>
            <person name="Kolonay J.F."/>
            <person name="Brinkac L.M."/>
            <person name="Beanan M.J."/>
            <person name="Dodson R.J."/>
            <person name="Daugherty S.C."/>
            <person name="Madupu R."/>
            <person name="Angiuoli S.V."/>
            <person name="Durkin A.S."/>
            <person name="Haft D.H."/>
            <person name="Vamathevan J.J."/>
            <person name="Khouri H."/>
            <person name="Utterback T.R."/>
            <person name="Lee C."/>
            <person name="Dimitrov G."/>
            <person name="Jiang L."/>
            <person name="Qin H."/>
            <person name="Weidman J."/>
            <person name="Tran K."/>
            <person name="Kang K.H."/>
            <person name="Hance I.R."/>
            <person name="Nelson K.E."/>
            <person name="Fraser C.M."/>
        </authorList>
    </citation>
    <scope>NUCLEOTIDE SEQUENCE [LARGE SCALE GENOMIC DNA]</scope>
    <source>
        <strain>ATCC 35984 / DSM 28319 / BCRC 17069 / CCUG 31568 / BM 3577 / RP62A</strain>
    </source>
</reference>
<proteinExistence type="inferred from homology"/>
<organism>
    <name type="scientific">Staphylococcus epidermidis (strain ATCC 35984 / DSM 28319 / BCRC 17069 / CCUG 31568 / BM 3577 / RP62A)</name>
    <dbReference type="NCBI Taxonomy" id="176279"/>
    <lineage>
        <taxon>Bacteria</taxon>
        <taxon>Bacillati</taxon>
        <taxon>Bacillota</taxon>
        <taxon>Bacilli</taxon>
        <taxon>Bacillales</taxon>
        <taxon>Staphylococcaceae</taxon>
        <taxon>Staphylococcus</taxon>
    </lineage>
</organism>
<keyword id="KW-1185">Reference proteome</keyword>
<keyword id="KW-0687">Ribonucleoprotein</keyword>
<keyword id="KW-0689">Ribosomal protein</keyword>
<evidence type="ECO:0000255" key="1">
    <source>
        <dbReference type="HAMAP-Rule" id="MF_01368"/>
    </source>
</evidence>
<evidence type="ECO:0000305" key="2"/>